<keyword id="KW-0165">Cleavage on pair of basic residues</keyword>
<keyword id="KW-0903">Direct protein sequencing</keyword>
<keyword id="KW-1015">Disulfide bond</keyword>
<keyword id="KW-0960">Knottin</keyword>
<keyword id="KW-0964">Secreted</keyword>
<keyword id="KW-0732">Signal</keyword>
<keyword id="KW-0800">Toxin</keyword>
<feature type="signal peptide" evidence="3">
    <location>
        <begin position="1"/>
        <end position="20"/>
    </location>
</feature>
<feature type="propeptide" id="PRO_0000035592" evidence="4">
    <location>
        <begin position="21"/>
        <end position="41"/>
    </location>
</feature>
<feature type="chain" id="PRO_0000035593" description="U1-nemetoxin-Csp1a">
    <location>
        <begin position="42"/>
        <end position="80"/>
    </location>
</feature>
<feature type="disulfide bond" evidence="2">
    <location>
        <begin position="42"/>
        <end position="56"/>
    </location>
</feature>
<feature type="disulfide bond" evidence="2">
    <location>
        <begin position="49"/>
        <end position="60"/>
    </location>
</feature>
<feature type="disulfide bond" evidence="2">
    <location>
        <begin position="55"/>
        <end position="77"/>
    </location>
</feature>
<feature type="disulfide bond" evidence="2">
    <location>
        <begin position="66"/>
        <end position="73"/>
    </location>
</feature>
<organism>
    <name type="scientific">Calisoga sp.</name>
    <name type="common">Spider</name>
    <dbReference type="NCBI Taxonomy" id="269418"/>
    <lineage>
        <taxon>Eukaryota</taxon>
        <taxon>Metazoa</taxon>
        <taxon>Ecdysozoa</taxon>
        <taxon>Arthropoda</taxon>
        <taxon>Chelicerata</taxon>
        <taxon>Arachnida</taxon>
        <taxon>Araneae</taxon>
        <taxon>Mygalomorphae</taxon>
        <taxon>Nemesiidae</taxon>
        <taxon>Calisoga</taxon>
    </lineage>
</organism>
<dbReference type="SMR" id="P60976"/>
<dbReference type="ArachnoServer" id="AS000028">
    <property type="toxin name" value="U1-nemetoxin-Csp1a"/>
</dbReference>
<dbReference type="GO" id="GO:0005576">
    <property type="term" value="C:extracellular region"/>
    <property type="evidence" value="ECO:0007669"/>
    <property type="project" value="UniProtKB-SubCell"/>
</dbReference>
<dbReference type="GO" id="GO:0090729">
    <property type="term" value="F:toxin activity"/>
    <property type="evidence" value="ECO:0007669"/>
    <property type="project" value="UniProtKB-KW"/>
</dbReference>
<dbReference type="InterPro" id="IPR012626">
    <property type="entry name" value="Spider_insecticidal_peptide"/>
</dbReference>
<dbReference type="Pfam" id="PF08091">
    <property type="entry name" value="Toxin_21"/>
    <property type="match status" value="1"/>
</dbReference>
<accession>P60976</accession>
<reference key="1">
    <citation type="patent" date="1997-11-18" number="US5688764">
        <title>Insecticidal peptides from spider venom.</title>
        <authorList>
            <person name="Johnson J.H."/>
            <person name="Kral R.M. Jr."/>
            <person name="Krapcho K."/>
        </authorList>
    </citation>
    <scope>NUCLEOTIDE SEQUENCE [MRNA]</scope>
    <scope>PROTEIN SEQUENCE OF 42-80</scope>
    <scope>TOXIC DOSE</scope>
    <scope>MASS SPECTROMETRY</scope>
    <source>
        <tissue>Venom</tissue>
        <tissue>Venom gland</tissue>
    </source>
</reference>
<evidence type="ECO:0000250" key="1"/>
<evidence type="ECO:0000250" key="2">
    <source>
        <dbReference type="UniProtKB" id="P49268"/>
    </source>
</evidence>
<evidence type="ECO:0000255" key="3"/>
<evidence type="ECO:0000269" key="4">
    <source ref="1"/>
</evidence>
<evidence type="ECO:0000303" key="5">
    <source ref="1"/>
</evidence>
<evidence type="ECO:0000305" key="6"/>
<proteinExistence type="evidence at protein level"/>
<protein>
    <recommendedName>
        <fullName>U1-nemetoxin-Csp1a</fullName>
        <shortName>U1-NETX-Csp1a</shortName>
    </recommendedName>
    <alternativeName>
        <fullName evidence="5">Toxic peptide A</fullName>
    </alternativeName>
</protein>
<sequence length="80" mass="8946">MKYFVVFCVLIIAVAAFTSAAEDGEVFEENPLEFPKTIQKRCISARYPCSNSKDCCSGNCGTFWTCYIRKDPCSKECLAP</sequence>
<name>CALA_CALS5</name>
<comment type="function">
    <text>Causes paralysis to insect larvae (H.virescens). This toxin is active only on insects.</text>
</comment>
<comment type="subcellular location">
    <subcellularLocation>
        <location>Secreted</location>
    </subcellularLocation>
</comment>
<comment type="tissue specificity">
    <text>Expressed by the venom gland.</text>
</comment>
<comment type="domain">
    <text evidence="1">The presence of a 'disulfide through disulfide knot' structurally defines this protein as a knottin.</text>
</comment>
<comment type="mass spectrometry" mass="4304.01" method="Electrospray" evidence="4"/>
<comment type="toxic dose">
    <text evidence="4">PD(50) is 2.37 +/- 0.12 mg/kg by injection into the abdomen of larvae of H.virescens.</text>
</comment>
<comment type="similarity">
    <text evidence="6">Belongs to the neurotoxin 13 (insecticidal toxin ABC) family. 02 (Calisoga) subfamily.</text>
</comment>